<feature type="chain" id="PRO_0000328959" description="Basic immunoglobulin-like variable motif-containing protein">
    <location>
        <begin position="1"/>
        <end position="271"/>
    </location>
</feature>
<comment type="similarity">
    <text evidence="1">Belongs to the BIVM family.</text>
</comment>
<name>BIVM_GIAIC</name>
<evidence type="ECO:0000305" key="1"/>
<protein>
    <recommendedName>
        <fullName>Basic immunoglobulin-like variable motif-containing protein</fullName>
    </recommendedName>
</protein>
<proteinExistence type="inferred from homology"/>
<dbReference type="EMBL" id="AACB02000003">
    <property type="protein sequence ID" value="EDO81745.1"/>
    <property type="molecule type" value="Genomic_DNA"/>
</dbReference>
<dbReference type="RefSeq" id="XP_001709419.1">
    <property type="nucleotide sequence ID" value="XM_001709367.1"/>
</dbReference>
<dbReference type="STRING" id="184922.A8B6A2"/>
<dbReference type="EnsemblProtists" id="EDO81745">
    <property type="protein sequence ID" value="EDO81745"/>
    <property type="gene ID" value="GL50803_13101"/>
</dbReference>
<dbReference type="GeneID" id="5702342"/>
<dbReference type="KEGG" id="gla:GL50803_0013101"/>
<dbReference type="VEuPathDB" id="GiardiaDB:GL50803_13101"/>
<dbReference type="HOGENOM" id="CLU_089804_0_0_1"/>
<dbReference type="OMA" id="WLIVADC"/>
<gene>
    <name type="primary">BIVM</name>
    <name type="synonym">BIVML</name>
    <name type="ORF">GL50803_13101</name>
</gene>
<accession>A8B6A2</accession>
<accession>Q8MWQ6</accession>
<reference key="1">
    <citation type="journal article" date="2007" name="Science">
        <title>Genomic minimalism in the early diverging intestinal parasite Giardia lamblia.</title>
        <authorList>
            <person name="Morrison H.G."/>
            <person name="McArthur A.G."/>
            <person name="Gillin F.D."/>
            <person name="Aley S.B."/>
            <person name="Adam R.D."/>
            <person name="Olsen G.J."/>
            <person name="Best A.A."/>
            <person name="Cande W.Z."/>
            <person name="Chen F."/>
            <person name="Cipriano M.J."/>
            <person name="Davids B.J."/>
            <person name="Dawson S.C."/>
            <person name="Elmendorf H.G."/>
            <person name="Hehl A.B."/>
            <person name="Holder M.E."/>
            <person name="Huse S.M."/>
            <person name="Kim U.U."/>
            <person name="Lasek-Nesselquist E."/>
            <person name="Manning G."/>
            <person name="Nigam A."/>
            <person name="Nixon J.E.J."/>
            <person name="Palm D."/>
            <person name="Passamaneck N.E."/>
            <person name="Prabhu A."/>
            <person name="Reich C.I."/>
            <person name="Reiner D.S."/>
            <person name="Samuelson J."/>
            <person name="Svard S.G."/>
            <person name="Sogin M.L."/>
        </authorList>
    </citation>
    <scope>NUCLEOTIDE SEQUENCE [LARGE SCALE GENOMIC DNA]</scope>
    <source>
        <strain>ATCC 50803 / WB clone C6</strain>
    </source>
</reference>
<organism>
    <name type="scientific">Giardia intestinalis (strain ATCC 50803 / WB clone C6)</name>
    <name type="common">Giardia lamblia</name>
    <dbReference type="NCBI Taxonomy" id="184922"/>
    <lineage>
        <taxon>Eukaryota</taxon>
        <taxon>Metamonada</taxon>
        <taxon>Diplomonadida</taxon>
        <taxon>Hexamitidae</taxon>
        <taxon>Giardiinae</taxon>
        <taxon>Giardia</taxon>
    </lineage>
</organism>
<sequence length="271" mass="30266">MERYPRQRLDDGRWQCVARPQYRYSCAISCLVSIFNHLFNRDMTLDECIAILFPDLKEDPRHYDFGPQASNSAVQSWFKTLCMHYGLSGTSCTIYKEQGRTRTACSKQEALKNIISALNTPRCALLYHCLNHYCIIVGYIISPSTPNRPSNHCVFSGDDGCTLKLLCADGTEAEDVDDSNIWLIVADCGKGTAPLRSLTWEFVHKDISTRPPYAYNARCPERGLLRKTESKGYIPVEIDSVLVNSTGVSTCVRSGGVIKGSSHCIIGFVSD</sequence>